<keyword id="KW-1003">Cell membrane</keyword>
<keyword id="KW-0472">Membrane</keyword>
<keyword id="KW-0812">Transmembrane</keyword>
<keyword id="KW-1133">Transmembrane helix</keyword>
<name>Y4782_BACC2</name>
<dbReference type="EMBL" id="CP001186">
    <property type="protein sequence ID" value="ACK98240.1"/>
    <property type="molecule type" value="Genomic_DNA"/>
</dbReference>
<dbReference type="RefSeq" id="WP_000025067.1">
    <property type="nucleotide sequence ID" value="NC_011772.1"/>
</dbReference>
<dbReference type="KEGG" id="bcg:BCG9842_B4782"/>
<dbReference type="HOGENOM" id="CLU_143991_0_0_9"/>
<dbReference type="Proteomes" id="UP000006744">
    <property type="component" value="Chromosome"/>
</dbReference>
<dbReference type="GO" id="GO:0005886">
    <property type="term" value="C:plasma membrane"/>
    <property type="evidence" value="ECO:0007669"/>
    <property type="project" value="UniProtKB-SubCell"/>
</dbReference>
<dbReference type="HAMAP" id="MF_01502">
    <property type="entry name" value="UPF0295"/>
    <property type="match status" value="1"/>
</dbReference>
<dbReference type="InterPro" id="IPR020912">
    <property type="entry name" value="UPF0295"/>
</dbReference>
<dbReference type="NCBIfam" id="NF002796">
    <property type="entry name" value="PRK02935.1"/>
    <property type="match status" value="1"/>
</dbReference>
<dbReference type="Pfam" id="PF11023">
    <property type="entry name" value="DUF2614"/>
    <property type="match status" value="1"/>
</dbReference>
<sequence length="118" mass="13543">MSIKYSNKINKIRTFALSLVFIGLFIAYLGVFFRENIIVMTTFMMVGFLAVIASTVVYFWIGMLSTKTIQIICPSCDKPTKMLGRVDACMHCNQPLTLDRDLEGKEFDEKYNKKSYKS</sequence>
<comment type="subcellular location">
    <subcellularLocation>
        <location evidence="1">Cell membrane</location>
        <topology evidence="1">Multi-pass membrane protein</topology>
    </subcellularLocation>
</comment>
<comment type="similarity">
    <text evidence="1">Belongs to the UPF0295 family.</text>
</comment>
<gene>
    <name type="ordered locus">BCG9842_B4782</name>
</gene>
<accession>B7IWR6</accession>
<evidence type="ECO:0000255" key="1">
    <source>
        <dbReference type="HAMAP-Rule" id="MF_01502"/>
    </source>
</evidence>
<feature type="chain" id="PRO_1000198209" description="UPF0295 protein BCG9842_B4782">
    <location>
        <begin position="1"/>
        <end position="118"/>
    </location>
</feature>
<feature type="transmembrane region" description="Helical" evidence="1">
    <location>
        <begin position="12"/>
        <end position="32"/>
    </location>
</feature>
<feature type="transmembrane region" description="Helical" evidence="1">
    <location>
        <begin position="43"/>
        <end position="63"/>
    </location>
</feature>
<organism>
    <name type="scientific">Bacillus cereus (strain G9842)</name>
    <dbReference type="NCBI Taxonomy" id="405531"/>
    <lineage>
        <taxon>Bacteria</taxon>
        <taxon>Bacillati</taxon>
        <taxon>Bacillota</taxon>
        <taxon>Bacilli</taxon>
        <taxon>Bacillales</taxon>
        <taxon>Bacillaceae</taxon>
        <taxon>Bacillus</taxon>
        <taxon>Bacillus cereus group</taxon>
    </lineage>
</organism>
<reference key="1">
    <citation type="submission" date="2008-10" db="EMBL/GenBank/DDBJ databases">
        <title>Genome sequence of Bacillus cereus G9842.</title>
        <authorList>
            <person name="Dodson R.J."/>
            <person name="Durkin A.S."/>
            <person name="Rosovitz M.J."/>
            <person name="Rasko D.A."/>
            <person name="Hoffmaster A."/>
            <person name="Ravel J."/>
            <person name="Sutton G."/>
        </authorList>
    </citation>
    <scope>NUCLEOTIDE SEQUENCE [LARGE SCALE GENOMIC DNA]</scope>
    <source>
        <strain>G9842</strain>
    </source>
</reference>
<protein>
    <recommendedName>
        <fullName evidence="1">UPF0295 protein BCG9842_B4782</fullName>
    </recommendedName>
</protein>
<proteinExistence type="inferred from homology"/>